<organism>
    <name type="scientific">Mus musculus</name>
    <name type="common">Mouse</name>
    <dbReference type="NCBI Taxonomy" id="10090"/>
    <lineage>
        <taxon>Eukaryota</taxon>
        <taxon>Metazoa</taxon>
        <taxon>Chordata</taxon>
        <taxon>Craniata</taxon>
        <taxon>Vertebrata</taxon>
        <taxon>Euteleostomi</taxon>
        <taxon>Mammalia</taxon>
        <taxon>Eutheria</taxon>
        <taxon>Euarchontoglires</taxon>
        <taxon>Glires</taxon>
        <taxon>Rodentia</taxon>
        <taxon>Myomorpha</taxon>
        <taxon>Muroidea</taxon>
        <taxon>Muridae</taxon>
        <taxon>Murinae</taxon>
        <taxon>Mus</taxon>
        <taxon>Mus</taxon>
    </lineage>
</organism>
<accession>Q8CGK7</accession>
<accession>Q61020</accession>
<accession>Q61589</accession>
<protein>
    <recommendedName>
        <fullName evidence="10">Guanine nucleotide-binding protein G(olf) subunit alpha</fullName>
        <ecNumber evidence="6">3.6.5.-</ecNumber>
    </recommendedName>
    <alternativeName>
        <fullName evidence="10">Adenylate cyclase-stimulating G alpha protein, olfactory type</fullName>
    </alternativeName>
</protein>
<keyword id="KW-0002">3D-structure</keyword>
<keyword id="KW-1003">Cell membrane</keyword>
<keyword id="KW-0903">Direct protein sequencing</keyword>
<keyword id="KW-0342">GTP-binding</keyword>
<keyword id="KW-0378">Hydrolase</keyword>
<keyword id="KW-0449">Lipoprotein</keyword>
<keyword id="KW-0460">Magnesium</keyword>
<keyword id="KW-0472">Membrane</keyword>
<keyword id="KW-0479">Metal-binding</keyword>
<keyword id="KW-0547">Nucleotide-binding</keyword>
<keyword id="KW-0564">Palmitate</keyword>
<keyword id="KW-0597">Phosphoprotein</keyword>
<keyword id="KW-1185">Reference proteome</keyword>
<keyword id="KW-0807">Transducer</keyword>
<dbReference type="EC" id="3.6.5.-" evidence="6"/>
<dbReference type="EMBL" id="AY179169">
    <property type="protein sequence ID" value="AAO03564.1"/>
    <property type="molecule type" value="mRNA"/>
</dbReference>
<dbReference type="EMBL" id="U38503">
    <property type="protein sequence ID" value="AAB01734.1"/>
    <property type="molecule type" value="mRNA"/>
</dbReference>
<dbReference type="EMBL" id="M57635">
    <property type="protein sequence ID" value="AAA63300.1"/>
    <property type="molecule type" value="mRNA"/>
</dbReference>
<dbReference type="CCDS" id="CCDS29318.1"/>
<dbReference type="PIR" id="A33833">
    <property type="entry name" value="A33833"/>
</dbReference>
<dbReference type="RefSeq" id="NP_034437.1">
    <property type="nucleotide sequence ID" value="NM_010307.3"/>
</dbReference>
<dbReference type="RefSeq" id="XP_030106197.1">
    <property type="nucleotide sequence ID" value="XM_030250337.2"/>
</dbReference>
<dbReference type="RefSeq" id="XP_036016882.1">
    <property type="nucleotide sequence ID" value="XM_036160989.1"/>
</dbReference>
<dbReference type="PDB" id="8HTG">
    <property type="method" value="X-ray"/>
    <property type="resolution" value="2.91 A"/>
    <property type="chains" value="A/B/C/D=2-381"/>
</dbReference>
<dbReference type="PDBsum" id="8HTG"/>
<dbReference type="SMR" id="Q8CGK7"/>
<dbReference type="BioGRID" id="199969">
    <property type="interactions" value="18"/>
</dbReference>
<dbReference type="FunCoup" id="Q8CGK7">
    <property type="interactions" value="2153"/>
</dbReference>
<dbReference type="IntAct" id="Q8CGK7">
    <property type="interactions" value="2"/>
</dbReference>
<dbReference type="MINT" id="Q8CGK7"/>
<dbReference type="STRING" id="10090.ENSMUSP00000025402"/>
<dbReference type="GlyGen" id="Q8CGK7">
    <property type="glycosylation" value="4 sites, 1 N-linked glycan (1 site), 1 O-linked glycan (2 sites)"/>
</dbReference>
<dbReference type="iPTMnet" id="Q8CGK7"/>
<dbReference type="PhosphoSitePlus" id="Q8CGK7"/>
<dbReference type="SwissPalm" id="Q8CGK7"/>
<dbReference type="jPOST" id="Q8CGK7"/>
<dbReference type="PaxDb" id="10090-ENSMUSP00000025402"/>
<dbReference type="ProteomicsDB" id="263380"/>
<dbReference type="Antibodypedia" id="4227">
    <property type="antibodies" value="178 antibodies from 27 providers"/>
</dbReference>
<dbReference type="DNASU" id="14680"/>
<dbReference type="Ensembl" id="ENSMUST00000076605.9">
    <property type="protein sequence ID" value="ENSMUSP00000075908.8"/>
    <property type="gene ID" value="ENSMUSG00000024524.18"/>
</dbReference>
<dbReference type="Ensembl" id="ENSMUST00000236771.2">
    <property type="protein sequence ID" value="ENSMUSP00000158245.2"/>
    <property type="gene ID" value="ENSMUSG00000024524.18"/>
</dbReference>
<dbReference type="GeneID" id="14680"/>
<dbReference type="KEGG" id="mmu:14680"/>
<dbReference type="UCSC" id="uc008flt.2">
    <property type="organism name" value="mouse"/>
</dbReference>
<dbReference type="AGR" id="MGI:95774"/>
<dbReference type="CTD" id="2774"/>
<dbReference type="MGI" id="MGI:95774">
    <property type="gene designation" value="Gnal"/>
</dbReference>
<dbReference type="VEuPathDB" id="HostDB:ENSMUSG00000024524"/>
<dbReference type="eggNOG" id="KOG0099">
    <property type="taxonomic scope" value="Eukaryota"/>
</dbReference>
<dbReference type="GeneTree" id="ENSGT00940000155271"/>
<dbReference type="HOGENOM" id="CLU_014184_3_0_1"/>
<dbReference type="InParanoid" id="Q8CGK7"/>
<dbReference type="OMA" id="KEFFEHA"/>
<dbReference type="OrthoDB" id="5817230at2759"/>
<dbReference type="PhylomeDB" id="Q8CGK7"/>
<dbReference type="Reactome" id="R-MMU-170660">
    <property type="pathway name" value="Adenylate cyclase activating pathway"/>
</dbReference>
<dbReference type="Reactome" id="R-MMU-170670">
    <property type="pathway name" value="Adenylate cyclase inhibitory pathway"/>
</dbReference>
<dbReference type="Reactome" id="R-MMU-381753">
    <property type="pathway name" value="Olfactory Signaling Pathway"/>
</dbReference>
<dbReference type="BioGRID-ORCS" id="14680">
    <property type="hits" value="0 hits in 77 CRISPR screens"/>
</dbReference>
<dbReference type="CD-CODE" id="CE726F99">
    <property type="entry name" value="Postsynaptic density"/>
</dbReference>
<dbReference type="ChiTaRS" id="Gnal">
    <property type="organism name" value="mouse"/>
</dbReference>
<dbReference type="PRO" id="PR:Q8CGK7"/>
<dbReference type="Proteomes" id="UP000000589">
    <property type="component" value="Chromosome 18"/>
</dbReference>
<dbReference type="RNAct" id="Q8CGK7">
    <property type="molecule type" value="protein"/>
</dbReference>
<dbReference type="Bgee" id="ENSMUSG00000024524">
    <property type="expression patterns" value="Expressed in olfactory tubercle and 138 other cell types or tissues"/>
</dbReference>
<dbReference type="ExpressionAtlas" id="Q8CGK7">
    <property type="expression patterns" value="baseline and differential"/>
</dbReference>
<dbReference type="GO" id="GO:0005834">
    <property type="term" value="C:heterotrimeric G-protein complex"/>
    <property type="evidence" value="ECO:0000247"/>
    <property type="project" value="MGI"/>
</dbReference>
<dbReference type="GO" id="GO:0005886">
    <property type="term" value="C:plasma membrane"/>
    <property type="evidence" value="ECO:0000304"/>
    <property type="project" value="Reactome"/>
</dbReference>
<dbReference type="GO" id="GO:0003925">
    <property type="term" value="F:G protein activity"/>
    <property type="evidence" value="ECO:0000314"/>
    <property type="project" value="UniProtKB"/>
</dbReference>
<dbReference type="GO" id="GO:0031683">
    <property type="term" value="F:G-protein beta/gamma-subunit complex binding"/>
    <property type="evidence" value="ECO:0007669"/>
    <property type="project" value="InterPro"/>
</dbReference>
<dbReference type="GO" id="GO:0005525">
    <property type="term" value="F:GTP binding"/>
    <property type="evidence" value="ECO:0007669"/>
    <property type="project" value="UniProtKB-KW"/>
</dbReference>
<dbReference type="GO" id="GO:0003924">
    <property type="term" value="F:GTPase activity"/>
    <property type="evidence" value="ECO:0000247"/>
    <property type="project" value="MGI"/>
</dbReference>
<dbReference type="GO" id="GO:0046872">
    <property type="term" value="F:metal ion binding"/>
    <property type="evidence" value="ECO:0007669"/>
    <property type="project" value="UniProtKB-KW"/>
</dbReference>
<dbReference type="GO" id="GO:0007191">
    <property type="term" value="P:adenylate cyclase-activating dopamine receptor signaling pathway"/>
    <property type="evidence" value="ECO:0000316"/>
    <property type="project" value="MGI"/>
</dbReference>
<dbReference type="GO" id="GO:0007189">
    <property type="term" value="P:adenylate cyclase-activating G protein-coupled receptor signaling pathway"/>
    <property type="evidence" value="ECO:0000314"/>
    <property type="project" value="MGI"/>
</dbReference>
<dbReference type="GO" id="GO:0007186">
    <property type="term" value="P:G protein-coupled receptor signaling pathway"/>
    <property type="evidence" value="ECO:0000247"/>
    <property type="project" value="MGI"/>
</dbReference>
<dbReference type="GO" id="GO:0001975">
    <property type="term" value="P:response to amphetamine"/>
    <property type="evidence" value="ECO:0000315"/>
    <property type="project" value="MGI"/>
</dbReference>
<dbReference type="GO" id="GO:0031000">
    <property type="term" value="P:response to caffeine"/>
    <property type="evidence" value="ECO:0000315"/>
    <property type="project" value="MGI"/>
</dbReference>
<dbReference type="GO" id="GO:0007608">
    <property type="term" value="P:sensory perception of smell"/>
    <property type="evidence" value="ECO:0000315"/>
    <property type="project" value="MGI"/>
</dbReference>
<dbReference type="CDD" id="cd00066">
    <property type="entry name" value="G-alpha"/>
    <property type="match status" value="1"/>
</dbReference>
<dbReference type="FunFam" id="3.40.50.300:FF:000720">
    <property type="entry name" value="Guanine nucleotide-binding protein G(k) subunit alpha"/>
    <property type="match status" value="1"/>
</dbReference>
<dbReference type="FunFam" id="1.10.400.10:FF:000003">
    <property type="entry name" value="Guanine nucleotide-binding protein G(S) subunit alpha"/>
    <property type="match status" value="1"/>
</dbReference>
<dbReference type="FunFam" id="3.40.50.300:FF:006178">
    <property type="entry name" value="Guanine nucleotide-binding protein G(s) subunit alpha isoforms short"/>
    <property type="match status" value="1"/>
</dbReference>
<dbReference type="Gene3D" id="1.10.400.10">
    <property type="entry name" value="GI Alpha 1, domain 2-like"/>
    <property type="match status" value="1"/>
</dbReference>
<dbReference type="Gene3D" id="3.40.50.300">
    <property type="entry name" value="P-loop containing nucleotide triphosphate hydrolases"/>
    <property type="match status" value="1"/>
</dbReference>
<dbReference type="InterPro" id="IPR000367">
    <property type="entry name" value="Gprotein_alpha_S"/>
</dbReference>
<dbReference type="InterPro" id="IPR001019">
    <property type="entry name" value="Gprotein_alpha_su"/>
</dbReference>
<dbReference type="InterPro" id="IPR011025">
    <property type="entry name" value="GproteinA_insert"/>
</dbReference>
<dbReference type="InterPro" id="IPR027417">
    <property type="entry name" value="P-loop_NTPase"/>
</dbReference>
<dbReference type="PANTHER" id="PTHR10218">
    <property type="entry name" value="GTP-BINDING PROTEIN ALPHA SUBUNIT"/>
    <property type="match status" value="1"/>
</dbReference>
<dbReference type="PANTHER" id="PTHR10218:SF233">
    <property type="entry name" value="GUANINE NUCLEOTIDE-BINDING PROTEIN G(OLF) SUBUNIT ALPHA"/>
    <property type="match status" value="1"/>
</dbReference>
<dbReference type="Pfam" id="PF00503">
    <property type="entry name" value="G-alpha"/>
    <property type="match status" value="1"/>
</dbReference>
<dbReference type="PRINTS" id="PR00318">
    <property type="entry name" value="GPROTEINA"/>
</dbReference>
<dbReference type="PRINTS" id="PR00443">
    <property type="entry name" value="GPROTEINAS"/>
</dbReference>
<dbReference type="SMART" id="SM00275">
    <property type="entry name" value="G_alpha"/>
    <property type="match status" value="1"/>
</dbReference>
<dbReference type="SUPFAM" id="SSF52540">
    <property type="entry name" value="P-loop containing nucleoside triphosphate hydrolases"/>
    <property type="match status" value="1"/>
</dbReference>
<dbReference type="SUPFAM" id="SSF47895">
    <property type="entry name" value="Transducin (alpha subunit), insertion domain"/>
    <property type="match status" value="1"/>
</dbReference>
<dbReference type="PROSITE" id="PS51882">
    <property type="entry name" value="G_ALPHA"/>
    <property type="match status" value="1"/>
</dbReference>
<evidence type="ECO:0000250" key="1">
    <source>
        <dbReference type="UniProtKB" id="P04896"/>
    </source>
</evidence>
<evidence type="ECO:0000250" key="2">
    <source>
        <dbReference type="UniProtKB" id="P38406"/>
    </source>
</evidence>
<evidence type="ECO:0000255" key="3">
    <source>
        <dbReference type="PROSITE-ProRule" id="PRU01230"/>
    </source>
</evidence>
<evidence type="ECO:0000256" key="4">
    <source>
        <dbReference type="SAM" id="MobiDB-lite"/>
    </source>
</evidence>
<evidence type="ECO:0000269" key="5">
    <source>
    </source>
</evidence>
<evidence type="ECO:0000269" key="6">
    <source>
    </source>
</evidence>
<evidence type="ECO:0000269" key="7">
    <source>
    </source>
</evidence>
<evidence type="ECO:0000269" key="8">
    <source>
    </source>
</evidence>
<evidence type="ECO:0000269" key="9">
    <source>
    </source>
</evidence>
<evidence type="ECO:0000303" key="10">
    <source>
    </source>
</evidence>
<evidence type="ECO:0000305" key="11"/>
<evidence type="ECO:0000305" key="12">
    <source>
    </source>
</evidence>
<evidence type="ECO:0000312" key="13">
    <source>
        <dbReference type="MGI" id="MGI:95774"/>
    </source>
</evidence>
<evidence type="ECO:0007744" key="14">
    <source>
        <dbReference type="PDB" id="8HTG"/>
    </source>
</evidence>
<evidence type="ECO:0007744" key="15">
    <source>
    </source>
</evidence>
<comment type="function">
    <text evidence="2 5 6 9">Guanine nucleotide-binding protein (G protein) involved as transducer in olfactory signal transduction controlled by G protein-coupled receptors (GPCRs) (PubMed:16754875, PubMed:21467038, PubMed:9459443). Contains the guanine nucleotide binding site and alternates between an active, GTP-bound state and an inactive, GDP-bound state (PubMed:21467038). Signaling by an activated GPCR promotes GDP release and GTP binding (PubMed:21467038). The alpha subunit has a low GTPase activity that converts bound GTP to GDP, thereby terminating the signal (PubMed:21467038). Both GDP release and GTP hydrolysis are modulated by numerous regulatory proteins (PubMed:21467038). GNAL/G(olf) alpha specifically mediates olfactory signal transduction within the olfactory neuroepithelium and the basal ganglia following GPCRs activation (PubMed:16754875, PubMed:9459443). Acts by promoting the specific activation of adenylyl cyclase ADCY3, resulting in increased levels of the signaling molecule cAMP (By similarity).</text>
</comment>
<comment type="catalytic activity">
    <reaction evidence="6">
        <text>GTP + H2O = GDP + phosphate + H(+)</text>
        <dbReference type="Rhea" id="RHEA:19669"/>
        <dbReference type="ChEBI" id="CHEBI:15377"/>
        <dbReference type="ChEBI" id="CHEBI:15378"/>
        <dbReference type="ChEBI" id="CHEBI:37565"/>
        <dbReference type="ChEBI" id="CHEBI:43474"/>
        <dbReference type="ChEBI" id="CHEBI:58189"/>
    </reaction>
    <physiologicalReaction direction="left-to-right" evidence="6">
        <dbReference type="Rhea" id="RHEA:19670"/>
    </physiologicalReaction>
</comment>
<comment type="subunit">
    <text evidence="5 6 7">G proteins are composed of 3 units; alpha, beta and gamma. The alpha chain contains the guanine nucleotide binding site (PubMed:16754875). Interacts with GAS2L2 (PubMed:23994616). Interacts (GDP-bound form) with RIC8B (via C-terminus); promoting GNAL folding and association with the plasma membrane (PubMed:16754875, PubMed:21467038).</text>
</comment>
<comment type="subcellular location">
    <subcellularLocation>
        <location evidence="5">Cell membrane</location>
        <topology evidence="11">Peripheral membrane protein</topology>
    </subcellularLocation>
</comment>
<comment type="disruption phenotype">
    <text evidence="9">Mice are anosmic and show a striking reduction in the response of primary olfactory sensory neurons to a wide variety of odors (PubMed:9459443). Most mice are unable to nurse and die within two days after birth (PubMed:9459443). Surviving mice are fertile but display hyperactive behaviors (PubMed:9459443). Females exhibit inadequate maternal behaviors (PubMed:9459443).</text>
</comment>
<comment type="similarity">
    <text evidence="11">Belongs to the G-alpha family. G(s) subfamily.</text>
</comment>
<proteinExistence type="evidence at protein level"/>
<sequence>MGCLGNSSKTAEDQGVDEKERREANKKIEKQLQKERLAYKATHRLLLLGAGESGKSTIVKQMRILHVNGFNPEEKKQKILDIRKNVKDAIVTIVSAMSTIIPPVPLANPENQFRSDYIKSIAPITDFEYSQEFFDHVKKLWDDEGVKACFERSNEYQLIDCAQYFLERIDSVSLVDYTPTDQDLLRCRVLTSGIFETRFQVDKVNFHMFDVGGQRDERRKWIQCFNDVTAIIYVAACSSYNMVIREDNNTNRLRESLDLFESIWNNRWLRTISIILFLNKQDMLAEKVLAGKSKIEDYFPEYANYTVPEDATPDAGEDPKVTRAKFFIRDLFLRISTATGDGKHYCYPHFTCAVDTENIRRVFNDCRDIIQRMHLKQYELL</sequence>
<name>GNAL_MOUSE</name>
<feature type="initiator methionine" description="Removed" evidence="1">
    <location>
        <position position="1"/>
    </location>
</feature>
<feature type="chain" id="PRO_0000203733" description="Guanine nucleotide-binding protein G(olf) subunit alpha">
    <location>
        <begin position="2"/>
        <end position="381"/>
    </location>
</feature>
<feature type="domain" description="G-alpha" evidence="3">
    <location>
        <begin position="41"/>
        <end position="381"/>
    </location>
</feature>
<feature type="region of interest" description="Disordered" evidence="4">
    <location>
        <begin position="1"/>
        <end position="25"/>
    </location>
</feature>
<feature type="region of interest" description="G1 motif" evidence="3">
    <location>
        <begin position="44"/>
        <end position="57"/>
    </location>
</feature>
<feature type="region of interest" description="G2 motif" evidence="3">
    <location>
        <begin position="183"/>
        <end position="191"/>
    </location>
</feature>
<feature type="region of interest" description="G3 motif" evidence="3">
    <location>
        <begin position="206"/>
        <end position="215"/>
    </location>
</feature>
<feature type="region of interest" description="G4 motif" evidence="3">
    <location>
        <begin position="275"/>
        <end position="282"/>
    </location>
</feature>
<feature type="region of interest" description="G5 motif" evidence="3">
    <location>
        <begin position="351"/>
        <end position="356"/>
    </location>
</feature>
<feature type="compositionally biased region" description="Basic and acidic residues" evidence="4">
    <location>
        <begin position="10"/>
        <end position="25"/>
    </location>
</feature>
<feature type="binding site" evidence="12 14">
    <location>
        <position position="52"/>
    </location>
    <ligand>
        <name>GTP</name>
        <dbReference type="ChEBI" id="CHEBI:37565"/>
    </ligand>
</feature>
<feature type="binding site" evidence="12 14">
    <location>
        <position position="53"/>
    </location>
    <ligand>
        <name>GTP</name>
        <dbReference type="ChEBI" id="CHEBI:37565"/>
    </ligand>
</feature>
<feature type="binding site" evidence="12 14">
    <location>
        <position position="54"/>
    </location>
    <ligand>
        <name>GTP</name>
        <dbReference type="ChEBI" id="CHEBI:37565"/>
    </ligand>
</feature>
<feature type="binding site" evidence="12 14">
    <location>
        <position position="55"/>
    </location>
    <ligand>
        <name>GTP</name>
        <dbReference type="ChEBI" id="CHEBI:37565"/>
    </ligand>
</feature>
<feature type="binding site" evidence="12 14">
    <location>
        <position position="56"/>
    </location>
    <ligand>
        <name>GTP</name>
        <dbReference type="ChEBI" id="CHEBI:37565"/>
    </ligand>
</feature>
<feature type="binding site" evidence="8 14">
    <location>
        <position position="56"/>
    </location>
    <ligand>
        <name>Mg(2+)</name>
        <dbReference type="ChEBI" id="CHEBI:18420"/>
    </ligand>
</feature>
<feature type="binding site" evidence="12 14">
    <location>
        <position position="57"/>
    </location>
    <ligand>
        <name>GTP</name>
        <dbReference type="ChEBI" id="CHEBI:37565"/>
    </ligand>
</feature>
<feature type="binding site" evidence="12 14">
    <location>
        <position position="185"/>
    </location>
    <ligand>
        <name>GTP</name>
        <dbReference type="ChEBI" id="CHEBI:37565"/>
    </ligand>
</feature>
<feature type="binding site" evidence="12 14">
    <location>
        <position position="186"/>
    </location>
    <ligand>
        <name>GTP</name>
        <dbReference type="ChEBI" id="CHEBI:37565"/>
    </ligand>
</feature>
<feature type="binding site" evidence="12 14">
    <location>
        <position position="191"/>
    </location>
    <ligand>
        <name>GTP</name>
        <dbReference type="ChEBI" id="CHEBI:37565"/>
    </ligand>
</feature>
<feature type="binding site" evidence="8 14">
    <location>
        <position position="191"/>
    </location>
    <ligand>
        <name>Mg(2+)</name>
        <dbReference type="ChEBI" id="CHEBI:18420"/>
    </ligand>
</feature>
<feature type="binding site" evidence="8 14">
    <location>
        <position position="210"/>
    </location>
    <ligand>
        <name>Mg(2+)</name>
        <dbReference type="ChEBI" id="CHEBI:18420"/>
    </ligand>
</feature>
<feature type="binding site" evidence="12 14">
    <location>
        <position position="213"/>
    </location>
    <ligand>
        <name>GTP</name>
        <dbReference type="ChEBI" id="CHEBI:37565"/>
    </ligand>
</feature>
<feature type="binding site" evidence="12 14">
    <location>
        <position position="279"/>
    </location>
    <ligand>
        <name>GTP</name>
        <dbReference type="ChEBI" id="CHEBI:37565"/>
    </ligand>
</feature>
<feature type="binding site" evidence="12 14">
    <location>
        <position position="280"/>
    </location>
    <ligand>
        <name>GTP</name>
        <dbReference type="ChEBI" id="CHEBI:37565"/>
    </ligand>
</feature>
<feature type="binding site" evidence="12 14">
    <location>
        <position position="282"/>
    </location>
    <ligand>
        <name>GTP</name>
        <dbReference type="ChEBI" id="CHEBI:37565"/>
    </ligand>
</feature>
<feature type="binding site" evidence="12 14">
    <location>
        <position position="353"/>
    </location>
    <ligand>
        <name>GTP</name>
        <dbReference type="ChEBI" id="CHEBI:37565"/>
    </ligand>
</feature>
<feature type="modified residue" description="Phosphothreonine" evidence="15">
    <location>
        <position position="178"/>
    </location>
</feature>
<feature type="lipid moiety-binding region" description="N-palmitoyl glycine" evidence="1">
    <location>
        <position position="2"/>
    </location>
</feature>
<feature type="lipid moiety-binding region" description="S-palmitoyl cysteine" evidence="1">
    <location>
        <position position="3"/>
    </location>
</feature>
<reference key="1">
    <citation type="submission" date="2002-11" db="EMBL/GenBank/DDBJ databases">
        <title>The mouse G protein Golf alpha subunit full length coding sequence.</title>
        <authorList>
            <person name="Von Dannecker L.E.C."/>
            <person name="Malnic B."/>
        </authorList>
    </citation>
    <scope>NUCLEOTIDE SEQUENCE [MRNA]</scope>
    <source>
        <strain>C57BL/6J</strain>
    </source>
</reference>
<reference key="2">
    <citation type="submission" date="2007-04" db="UniProtKB">
        <authorList>
            <person name="Lubec G."/>
            <person name="Kang S.U."/>
        </authorList>
    </citation>
    <scope>PROTEIN SEQUENCE OF 45-55</scope>
    <scope>IDENTIFICATION BY MASS SPECTROMETRY</scope>
    <source>
        <strain>C57BL/6J</strain>
        <tissue>Brain</tissue>
    </source>
</reference>
<reference key="3">
    <citation type="journal article" date="1996" name="Mol. Reprod. Dev.">
        <title>G protein gene expression during mouse oocyte growth and maturation, and preimplantation embryo development.</title>
        <authorList>
            <person name="Williams C.J."/>
            <person name="Schultz R.M."/>
            <person name="Kopf G.S."/>
        </authorList>
    </citation>
    <scope>NUCLEOTIDE SEQUENCE [MRNA] OF 209-373</scope>
    <source>
        <strain>CF-1 / Harlan</strain>
        <tissue>Brain</tissue>
    </source>
</reference>
<reference key="4">
    <citation type="journal article" date="1989" name="Proc. Natl. Acad. Sci. U.S.A.">
        <title>Diversity of the G-protein family: sequences from five additional alpha subunits in the mouse.</title>
        <authorList>
            <person name="Strathmann M."/>
            <person name="Wilkie T.M."/>
            <person name="Simon M.I."/>
        </authorList>
    </citation>
    <scope>NUCLEOTIDE SEQUENCE [MRNA] OF 216-276</scope>
    <source>
        <tissue>Brain</tissue>
    </source>
</reference>
<reference key="5">
    <citation type="journal article" date="1998" name="Neuron">
        <title>Mice deficient in G(olf) are anosmic.</title>
        <authorList>
            <person name="Belluscio L."/>
            <person name="Gold G.H."/>
            <person name="Nemes A."/>
            <person name="Axel R."/>
        </authorList>
    </citation>
    <scope>FUNCTION</scope>
    <scope>DISRUPTION PHENOTYPE</scope>
</reference>
<reference key="6">
    <citation type="journal article" date="2006" name="Proc. Natl. Acad. Sci. U.S.A.">
        <title>Ric-8B promotes functional expression of odorant receptors.</title>
        <authorList>
            <person name="Von Dannecker L.E."/>
            <person name="Mercadante A.F."/>
            <person name="Malnic B."/>
        </authorList>
    </citation>
    <scope>SUBCELLULAR LOCATION</scope>
    <scope>INTERACTION WITH RIC8B</scope>
</reference>
<reference key="7">
    <citation type="journal article" date="2010" name="Cell">
        <title>A tissue-specific atlas of mouse protein phosphorylation and expression.</title>
        <authorList>
            <person name="Huttlin E.L."/>
            <person name="Jedrychowski M.P."/>
            <person name="Elias J.E."/>
            <person name="Goswami T."/>
            <person name="Rad R."/>
            <person name="Beausoleil S.A."/>
            <person name="Villen J."/>
            <person name="Haas W."/>
            <person name="Sowa M.E."/>
            <person name="Gygi S.P."/>
        </authorList>
    </citation>
    <scope>PHOSPHORYLATION [LARGE SCALE ANALYSIS] AT THR-178</scope>
    <scope>IDENTIFICATION BY MASS SPECTROMETRY [LARGE SCALE ANALYSIS]</scope>
    <source>
        <tissue>Brain</tissue>
    </source>
</reference>
<reference key="8">
    <citation type="journal article" date="2011" name="J. Biol. Chem.">
        <title>Ric-8B is a GTP-dependent G protein alphas guanine nucleotide exchange factor.</title>
        <authorList>
            <person name="Chan P."/>
            <person name="Gabay M."/>
            <person name="Wright F.A."/>
            <person name="Tall G.G."/>
        </authorList>
    </citation>
    <scope>FUNCTION</scope>
    <scope>CATALYTIC ACTIVITY</scope>
    <scope>INTERACTION WITH RIC8B</scope>
</reference>
<reference key="9">
    <citation type="journal article" date="2013" name="Biochim. Biophys. Acta">
        <title>A novel Galphas-binding protein, Gas-2 like 2, facilitates the signaling of the A2A adenosine receptor.</title>
        <authorList>
            <person name="Wu Y.C."/>
            <person name="Lai H.L."/>
            <person name="Chang W.C."/>
            <person name="Lin J.T."/>
            <person name="Liu Y.J."/>
            <person name="Chern Y."/>
        </authorList>
    </citation>
    <scope>INTERACTION WITH GAS2L2</scope>
</reference>
<reference evidence="14" key="10">
    <citation type="journal article" date="2023" name="Nat. Commun.">
        <title>Understanding the molecular mechanisms of odorant binding and activation of the human OR52 family.</title>
        <authorList>
            <person name="Choi C."/>
            <person name="Bae J."/>
            <person name="Kim S."/>
            <person name="Lee S."/>
            <person name="Kang H."/>
            <person name="Kim J."/>
            <person name="Bang I."/>
            <person name="Kim K."/>
            <person name="Huh W.K."/>
            <person name="Seok C."/>
            <person name="Park H."/>
            <person name="Im W."/>
            <person name="Choi H.J."/>
        </authorList>
    </citation>
    <scope>X-RAY CRYSTALLOGRAPHY (2.91 ANGSTROMS) OF 2-381 IN COMPLEX WITH GTP ANALOG AND MG(2+)</scope>
</reference>
<gene>
    <name evidence="13" type="primary">Gnal</name>
</gene>